<proteinExistence type="inferred from homology"/>
<comment type="function">
    <text evidence="1">Hydrolyzes ribosome-free peptidyl-tRNAs (with 1 or more amino acids incorporated), which drop off the ribosome during protein synthesis, or as a result of ribosome stalling.</text>
</comment>
<comment type="function">
    <text evidence="1">Catalyzes the release of premature peptidyl moieties from peptidyl-tRNA molecules trapped in stalled 50S ribosomal subunits, and thus maintains levels of free tRNAs and 50S ribosomes.</text>
</comment>
<comment type="catalytic activity">
    <reaction evidence="1">
        <text>an N-acyl-L-alpha-aminoacyl-tRNA + H2O = an N-acyl-L-amino acid + a tRNA + H(+)</text>
        <dbReference type="Rhea" id="RHEA:54448"/>
        <dbReference type="Rhea" id="RHEA-COMP:10123"/>
        <dbReference type="Rhea" id="RHEA-COMP:13883"/>
        <dbReference type="ChEBI" id="CHEBI:15377"/>
        <dbReference type="ChEBI" id="CHEBI:15378"/>
        <dbReference type="ChEBI" id="CHEBI:59874"/>
        <dbReference type="ChEBI" id="CHEBI:78442"/>
        <dbReference type="ChEBI" id="CHEBI:138191"/>
        <dbReference type="EC" id="3.1.1.29"/>
    </reaction>
</comment>
<comment type="subunit">
    <text evidence="1">Monomer.</text>
</comment>
<comment type="subcellular location">
    <subcellularLocation>
        <location evidence="1">Cytoplasm</location>
    </subcellularLocation>
</comment>
<comment type="similarity">
    <text evidence="1">Belongs to the PTH family.</text>
</comment>
<sequence length="189" mass="20990">MAIKLIVGLRNPGSAYEQTRHNAGAWLVTALAQRHNSHFKIDKKMQAELTEIDINNHPCRLVLPLSFMNHSGQTTRIISQFYKIEPGEILIVHDELDLPVGRIKLKTGGGHGGHNGLRDITAQLGTGVFHRLRIGIGHPGHKDLVHQYVLSRPSMHDRQQIYDAIDRGIAIIPIVLSGDMARAMNQVNA</sequence>
<protein>
    <recommendedName>
        <fullName evidence="1">Peptidyl-tRNA hydrolase</fullName>
        <shortName evidence="1">Pth</shortName>
        <ecNumber evidence="1">3.1.1.29</ecNumber>
    </recommendedName>
</protein>
<accession>A5IAS3</accession>
<reference key="1">
    <citation type="submission" date="2006-11" db="EMBL/GenBank/DDBJ databases">
        <title>Identification and characterization of a new conjugation/ type IVA secretion system (trb/tra) of L. pneumophila Corby localized on a mobile genomic island.</title>
        <authorList>
            <person name="Gloeckner G."/>
            <person name="Albert-Weissenberger C."/>
            <person name="Weinmann E."/>
            <person name="Jacobi S."/>
            <person name="Schunder E."/>
            <person name="Steinert M."/>
            <person name="Buchrieser C."/>
            <person name="Hacker J."/>
            <person name="Heuner K."/>
        </authorList>
    </citation>
    <scope>NUCLEOTIDE SEQUENCE [LARGE SCALE GENOMIC DNA]</scope>
    <source>
        <strain>Corby</strain>
    </source>
</reference>
<gene>
    <name evidence="1" type="primary">pth</name>
    <name type="ordered locus">LPC_0486</name>
</gene>
<name>PTH_LEGPC</name>
<keyword id="KW-0963">Cytoplasm</keyword>
<keyword id="KW-0378">Hydrolase</keyword>
<keyword id="KW-0694">RNA-binding</keyword>
<keyword id="KW-0820">tRNA-binding</keyword>
<feature type="chain" id="PRO_1000010604" description="Peptidyl-tRNA hydrolase">
    <location>
        <begin position="1"/>
        <end position="189"/>
    </location>
</feature>
<feature type="active site" description="Proton acceptor" evidence="1">
    <location>
        <position position="21"/>
    </location>
</feature>
<feature type="binding site" evidence="1">
    <location>
        <position position="16"/>
    </location>
    <ligand>
        <name>tRNA</name>
        <dbReference type="ChEBI" id="CHEBI:17843"/>
    </ligand>
</feature>
<feature type="binding site" evidence="1">
    <location>
        <position position="67"/>
    </location>
    <ligand>
        <name>tRNA</name>
        <dbReference type="ChEBI" id="CHEBI:17843"/>
    </ligand>
</feature>
<feature type="binding site" evidence="1">
    <location>
        <position position="69"/>
    </location>
    <ligand>
        <name>tRNA</name>
        <dbReference type="ChEBI" id="CHEBI:17843"/>
    </ligand>
</feature>
<feature type="binding site" evidence="1">
    <location>
        <position position="115"/>
    </location>
    <ligand>
        <name>tRNA</name>
        <dbReference type="ChEBI" id="CHEBI:17843"/>
    </ligand>
</feature>
<feature type="site" description="Discriminates between blocked and unblocked aminoacyl-tRNA" evidence="1">
    <location>
        <position position="11"/>
    </location>
</feature>
<feature type="site" description="Stabilizes the basic form of H active site to accept a proton" evidence="1">
    <location>
        <position position="94"/>
    </location>
</feature>
<evidence type="ECO:0000255" key="1">
    <source>
        <dbReference type="HAMAP-Rule" id="MF_00083"/>
    </source>
</evidence>
<dbReference type="EC" id="3.1.1.29" evidence="1"/>
<dbReference type="EMBL" id="CP000675">
    <property type="protein sequence ID" value="ABQ54473.1"/>
    <property type="molecule type" value="Genomic_DNA"/>
</dbReference>
<dbReference type="RefSeq" id="WP_011947568.1">
    <property type="nucleotide sequence ID" value="NC_009494.2"/>
</dbReference>
<dbReference type="SMR" id="A5IAS3"/>
<dbReference type="KEGG" id="lpc:LPC_0486"/>
<dbReference type="HOGENOM" id="CLU_062456_3_1_6"/>
<dbReference type="GO" id="GO:0005737">
    <property type="term" value="C:cytoplasm"/>
    <property type="evidence" value="ECO:0007669"/>
    <property type="project" value="UniProtKB-SubCell"/>
</dbReference>
<dbReference type="GO" id="GO:0004045">
    <property type="term" value="F:peptidyl-tRNA hydrolase activity"/>
    <property type="evidence" value="ECO:0007669"/>
    <property type="project" value="UniProtKB-UniRule"/>
</dbReference>
<dbReference type="GO" id="GO:0000049">
    <property type="term" value="F:tRNA binding"/>
    <property type="evidence" value="ECO:0007669"/>
    <property type="project" value="UniProtKB-UniRule"/>
</dbReference>
<dbReference type="GO" id="GO:0006515">
    <property type="term" value="P:protein quality control for misfolded or incompletely synthesized proteins"/>
    <property type="evidence" value="ECO:0007669"/>
    <property type="project" value="UniProtKB-UniRule"/>
</dbReference>
<dbReference type="GO" id="GO:0072344">
    <property type="term" value="P:rescue of stalled ribosome"/>
    <property type="evidence" value="ECO:0007669"/>
    <property type="project" value="UniProtKB-UniRule"/>
</dbReference>
<dbReference type="CDD" id="cd00462">
    <property type="entry name" value="PTH"/>
    <property type="match status" value="1"/>
</dbReference>
<dbReference type="FunFam" id="3.40.50.1470:FF:000001">
    <property type="entry name" value="Peptidyl-tRNA hydrolase"/>
    <property type="match status" value="1"/>
</dbReference>
<dbReference type="Gene3D" id="3.40.50.1470">
    <property type="entry name" value="Peptidyl-tRNA hydrolase"/>
    <property type="match status" value="1"/>
</dbReference>
<dbReference type="HAMAP" id="MF_00083">
    <property type="entry name" value="Pept_tRNA_hydro_bact"/>
    <property type="match status" value="1"/>
</dbReference>
<dbReference type="InterPro" id="IPR001328">
    <property type="entry name" value="Pept_tRNA_hydro"/>
</dbReference>
<dbReference type="InterPro" id="IPR018171">
    <property type="entry name" value="Pept_tRNA_hydro_CS"/>
</dbReference>
<dbReference type="InterPro" id="IPR036416">
    <property type="entry name" value="Pept_tRNA_hydro_sf"/>
</dbReference>
<dbReference type="NCBIfam" id="TIGR00447">
    <property type="entry name" value="pth"/>
    <property type="match status" value="1"/>
</dbReference>
<dbReference type="PANTHER" id="PTHR17224">
    <property type="entry name" value="PEPTIDYL-TRNA HYDROLASE"/>
    <property type="match status" value="1"/>
</dbReference>
<dbReference type="PANTHER" id="PTHR17224:SF1">
    <property type="entry name" value="PEPTIDYL-TRNA HYDROLASE"/>
    <property type="match status" value="1"/>
</dbReference>
<dbReference type="Pfam" id="PF01195">
    <property type="entry name" value="Pept_tRNA_hydro"/>
    <property type="match status" value="1"/>
</dbReference>
<dbReference type="SUPFAM" id="SSF53178">
    <property type="entry name" value="Peptidyl-tRNA hydrolase-like"/>
    <property type="match status" value="1"/>
</dbReference>
<dbReference type="PROSITE" id="PS01196">
    <property type="entry name" value="PEPT_TRNA_HYDROL_2"/>
    <property type="match status" value="1"/>
</dbReference>
<organism>
    <name type="scientific">Legionella pneumophila (strain Corby)</name>
    <dbReference type="NCBI Taxonomy" id="400673"/>
    <lineage>
        <taxon>Bacteria</taxon>
        <taxon>Pseudomonadati</taxon>
        <taxon>Pseudomonadota</taxon>
        <taxon>Gammaproteobacteria</taxon>
        <taxon>Legionellales</taxon>
        <taxon>Legionellaceae</taxon>
        <taxon>Legionella</taxon>
    </lineage>
</organism>